<sequence>MSRVCQVTGKRPAVGNNRSHAMNATKRRFLPNLHTHRFWVESEKRFVTLRLTAKGMRIIDKKGIDAVLADIRARGEKI</sequence>
<keyword id="KW-1185">Reference proteome</keyword>
<keyword id="KW-0687">Ribonucleoprotein</keyword>
<keyword id="KW-0689">Ribosomal protein</keyword>
<dbReference type="EMBL" id="AE004439">
    <property type="protein sequence ID" value="AAK03235.1"/>
    <property type="molecule type" value="Genomic_DNA"/>
</dbReference>
<dbReference type="RefSeq" id="WP_005717521.1">
    <property type="nucleotide sequence ID" value="NC_002663.1"/>
</dbReference>
<dbReference type="SMR" id="Q9CLR1"/>
<dbReference type="STRING" id="272843.PM1151"/>
<dbReference type="EnsemblBacteria" id="AAK03235">
    <property type="protein sequence ID" value="AAK03235"/>
    <property type="gene ID" value="PM1151"/>
</dbReference>
<dbReference type="GeneID" id="77206467"/>
<dbReference type="KEGG" id="pmu:PM1151"/>
<dbReference type="HOGENOM" id="CLU_064548_3_1_6"/>
<dbReference type="OrthoDB" id="9805609at2"/>
<dbReference type="Proteomes" id="UP000000809">
    <property type="component" value="Chromosome"/>
</dbReference>
<dbReference type="GO" id="GO:0022625">
    <property type="term" value="C:cytosolic large ribosomal subunit"/>
    <property type="evidence" value="ECO:0007669"/>
    <property type="project" value="TreeGrafter"/>
</dbReference>
<dbReference type="GO" id="GO:0003735">
    <property type="term" value="F:structural constituent of ribosome"/>
    <property type="evidence" value="ECO:0007669"/>
    <property type="project" value="InterPro"/>
</dbReference>
<dbReference type="GO" id="GO:0006412">
    <property type="term" value="P:translation"/>
    <property type="evidence" value="ECO:0007669"/>
    <property type="project" value="UniProtKB-UniRule"/>
</dbReference>
<dbReference type="FunFam" id="2.30.170.40:FF:000001">
    <property type="entry name" value="50S ribosomal protein L28"/>
    <property type="match status" value="1"/>
</dbReference>
<dbReference type="Gene3D" id="2.30.170.40">
    <property type="entry name" value="Ribosomal protein L28/L24"/>
    <property type="match status" value="1"/>
</dbReference>
<dbReference type="HAMAP" id="MF_00373">
    <property type="entry name" value="Ribosomal_bL28"/>
    <property type="match status" value="1"/>
</dbReference>
<dbReference type="InterPro" id="IPR026569">
    <property type="entry name" value="Ribosomal_bL28"/>
</dbReference>
<dbReference type="InterPro" id="IPR034704">
    <property type="entry name" value="Ribosomal_bL28/bL31-like_sf"/>
</dbReference>
<dbReference type="InterPro" id="IPR001383">
    <property type="entry name" value="Ribosomal_bL28_bact-type"/>
</dbReference>
<dbReference type="InterPro" id="IPR037147">
    <property type="entry name" value="Ribosomal_bL28_sf"/>
</dbReference>
<dbReference type="NCBIfam" id="TIGR00009">
    <property type="entry name" value="L28"/>
    <property type="match status" value="1"/>
</dbReference>
<dbReference type="PANTHER" id="PTHR13528">
    <property type="entry name" value="39S RIBOSOMAL PROTEIN L28, MITOCHONDRIAL"/>
    <property type="match status" value="1"/>
</dbReference>
<dbReference type="PANTHER" id="PTHR13528:SF2">
    <property type="entry name" value="LARGE RIBOSOMAL SUBUNIT PROTEIN BL28M"/>
    <property type="match status" value="1"/>
</dbReference>
<dbReference type="Pfam" id="PF00830">
    <property type="entry name" value="Ribosomal_L28"/>
    <property type="match status" value="1"/>
</dbReference>
<dbReference type="SUPFAM" id="SSF143800">
    <property type="entry name" value="L28p-like"/>
    <property type="match status" value="1"/>
</dbReference>
<accession>Q9CLR1</accession>
<feature type="chain" id="PRO_0000178523" description="Large ribosomal subunit protein bL28">
    <location>
        <begin position="1"/>
        <end position="78"/>
    </location>
</feature>
<comment type="similarity">
    <text evidence="1">Belongs to the bacterial ribosomal protein bL28 family.</text>
</comment>
<gene>
    <name evidence="1" type="primary">rpmB</name>
    <name evidence="1" type="synonym">rpl28</name>
    <name type="ordered locus">PM1151</name>
</gene>
<name>RL28_PASMU</name>
<organism>
    <name type="scientific">Pasteurella multocida (strain Pm70)</name>
    <dbReference type="NCBI Taxonomy" id="272843"/>
    <lineage>
        <taxon>Bacteria</taxon>
        <taxon>Pseudomonadati</taxon>
        <taxon>Pseudomonadota</taxon>
        <taxon>Gammaproteobacteria</taxon>
        <taxon>Pasteurellales</taxon>
        <taxon>Pasteurellaceae</taxon>
        <taxon>Pasteurella</taxon>
    </lineage>
</organism>
<protein>
    <recommendedName>
        <fullName evidence="1">Large ribosomal subunit protein bL28</fullName>
    </recommendedName>
    <alternativeName>
        <fullName evidence="2">50S ribosomal protein L28</fullName>
    </alternativeName>
</protein>
<proteinExistence type="inferred from homology"/>
<reference key="1">
    <citation type="journal article" date="2001" name="Proc. Natl. Acad. Sci. U.S.A.">
        <title>Complete genomic sequence of Pasteurella multocida Pm70.</title>
        <authorList>
            <person name="May B.J."/>
            <person name="Zhang Q."/>
            <person name="Li L.L."/>
            <person name="Paustian M.L."/>
            <person name="Whittam T.S."/>
            <person name="Kapur V."/>
        </authorList>
    </citation>
    <scope>NUCLEOTIDE SEQUENCE [LARGE SCALE GENOMIC DNA]</scope>
    <source>
        <strain>Pm70</strain>
    </source>
</reference>
<evidence type="ECO:0000255" key="1">
    <source>
        <dbReference type="HAMAP-Rule" id="MF_00373"/>
    </source>
</evidence>
<evidence type="ECO:0000305" key="2"/>